<name>PDXT_OENOB</name>
<gene>
    <name evidence="1" type="primary">pdxT</name>
    <name type="ordered locus">OEOE_1037</name>
</gene>
<accession>Q04F27</accession>
<reference key="1">
    <citation type="journal article" date="2006" name="Proc. Natl. Acad. Sci. U.S.A.">
        <title>Comparative genomics of the lactic acid bacteria.</title>
        <authorList>
            <person name="Makarova K.S."/>
            <person name="Slesarev A."/>
            <person name="Wolf Y.I."/>
            <person name="Sorokin A."/>
            <person name="Mirkin B."/>
            <person name="Koonin E.V."/>
            <person name="Pavlov A."/>
            <person name="Pavlova N."/>
            <person name="Karamychev V."/>
            <person name="Polouchine N."/>
            <person name="Shakhova V."/>
            <person name="Grigoriev I."/>
            <person name="Lou Y."/>
            <person name="Rohksar D."/>
            <person name="Lucas S."/>
            <person name="Huang K."/>
            <person name="Goodstein D.M."/>
            <person name="Hawkins T."/>
            <person name="Plengvidhya V."/>
            <person name="Welker D."/>
            <person name="Hughes J."/>
            <person name="Goh Y."/>
            <person name="Benson A."/>
            <person name="Baldwin K."/>
            <person name="Lee J.-H."/>
            <person name="Diaz-Muniz I."/>
            <person name="Dosti B."/>
            <person name="Smeianov V."/>
            <person name="Wechter W."/>
            <person name="Barabote R."/>
            <person name="Lorca G."/>
            <person name="Altermann E."/>
            <person name="Barrangou R."/>
            <person name="Ganesan B."/>
            <person name="Xie Y."/>
            <person name="Rawsthorne H."/>
            <person name="Tamir D."/>
            <person name="Parker C."/>
            <person name="Breidt F."/>
            <person name="Broadbent J.R."/>
            <person name="Hutkins R."/>
            <person name="O'Sullivan D."/>
            <person name="Steele J."/>
            <person name="Unlu G."/>
            <person name="Saier M.H. Jr."/>
            <person name="Klaenhammer T."/>
            <person name="Richardson P."/>
            <person name="Kozyavkin S."/>
            <person name="Weimer B.C."/>
            <person name="Mills D.A."/>
        </authorList>
    </citation>
    <scope>NUCLEOTIDE SEQUENCE [LARGE SCALE GENOMIC DNA]</scope>
    <source>
        <strain>ATCC BAA-331 / PSU-1</strain>
    </source>
</reference>
<evidence type="ECO:0000255" key="1">
    <source>
        <dbReference type="HAMAP-Rule" id="MF_01615"/>
    </source>
</evidence>
<proteinExistence type="inferred from homology"/>
<dbReference type="EC" id="4.3.3.6" evidence="1"/>
<dbReference type="EC" id="3.5.1.2" evidence="1"/>
<dbReference type="EMBL" id="CP000411">
    <property type="protein sequence ID" value="ABJ56945.1"/>
    <property type="molecule type" value="Genomic_DNA"/>
</dbReference>
<dbReference type="RefSeq" id="WP_002816429.1">
    <property type="nucleotide sequence ID" value="NC_008528.1"/>
</dbReference>
<dbReference type="SMR" id="Q04F27"/>
<dbReference type="STRING" id="203123.OEOE_1037"/>
<dbReference type="KEGG" id="ooe:OEOE_1037"/>
<dbReference type="eggNOG" id="COG0311">
    <property type="taxonomic scope" value="Bacteria"/>
</dbReference>
<dbReference type="HOGENOM" id="CLU_069674_2_0_9"/>
<dbReference type="UniPathway" id="UPA00245"/>
<dbReference type="Proteomes" id="UP000000774">
    <property type="component" value="Chromosome"/>
</dbReference>
<dbReference type="GO" id="GO:0005829">
    <property type="term" value="C:cytosol"/>
    <property type="evidence" value="ECO:0007669"/>
    <property type="project" value="TreeGrafter"/>
</dbReference>
<dbReference type="GO" id="GO:1903600">
    <property type="term" value="C:glutaminase complex"/>
    <property type="evidence" value="ECO:0007669"/>
    <property type="project" value="TreeGrafter"/>
</dbReference>
<dbReference type="GO" id="GO:0004359">
    <property type="term" value="F:glutaminase activity"/>
    <property type="evidence" value="ECO:0007669"/>
    <property type="project" value="UniProtKB-UniRule"/>
</dbReference>
<dbReference type="GO" id="GO:0036381">
    <property type="term" value="F:pyridoxal 5'-phosphate synthase (glutamine hydrolysing) activity"/>
    <property type="evidence" value="ECO:0007669"/>
    <property type="project" value="UniProtKB-UniRule"/>
</dbReference>
<dbReference type="GO" id="GO:0006543">
    <property type="term" value="P:glutamine catabolic process"/>
    <property type="evidence" value="ECO:0007669"/>
    <property type="project" value="UniProtKB-UniRule"/>
</dbReference>
<dbReference type="GO" id="GO:0042823">
    <property type="term" value="P:pyridoxal phosphate biosynthetic process"/>
    <property type="evidence" value="ECO:0007669"/>
    <property type="project" value="UniProtKB-UniRule"/>
</dbReference>
<dbReference type="GO" id="GO:0008614">
    <property type="term" value="P:pyridoxine metabolic process"/>
    <property type="evidence" value="ECO:0007669"/>
    <property type="project" value="TreeGrafter"/>
</dbReference>
<dbReference type="CDD" id="cd01749">
    <property type="entry name" value="GATase1_PB"/>
    <property type="match status" value="1"/>
</dbReference>
<dbReference type="FunFam" id="3.40.50.880:FF:000010">
    <property type="entry name" value="uncharacterized protein LOC100176842 isoform X2"/>
    <property type="match status" value="1"/>
</dbReference>
<dbReference type="Gene3D" id="3.40.50.880">
    <property type="match status" value="1"/>
</dbReference>
<dbReference type="HAMAP" id="MF_01615">
    <property type="entry name" value="PdxT"/>
    <property type="match status" value="1"/>
</dbReference>
<dbReference type="InterPro" id="IPR029062">
    <property type="entry name" value="Class_I_gatase-like"/>
</dbReference>
<dbReference type="InterPro" id="IPR002161">
    <property type="entry name" value="PdxT/SNO"/>
</dbReference>
<dbReference type="InterPro" id="IPR021196">
    <property type="entry name" value="PdxT/SNO_CS"/>
</dbReference>
<dbReference type="NCBIfam" id="TIGR03800">
    <property type="entry name" value="PLP_synth_Pdx2"/>
    <property type="match status" value="1"/>
</dbReference>
<dbReference type="PANTHER" id="PTHR31559">
    <property type="entry name" value="PYRIDOXAL 5'-PHOSPHATE SYNTHASE SUBUNIT SNO"/>
    <property type="match status" value="1"/>
</dbReference>
<dbReference type="PANTHER" id="PTHR31559:SF0">
    <property type="entry name" value="PYRIDOXAL 5'-PHOSPHATE SYNTHASE SUBUNIT SNO1-RELATED"/>
    <property type="match status" value="1"/>
</dbReference>
<dbReference type="Pfam" id="PF01174">
    <property type="entry name" value="SNO"/>
    <property type="match status" value="1"/>
</dbReference>
<dbReference type="PIRSF" id="PIRSF005639">
    <property type="entry name" value="Glut_amidoT_SNO"/>
    <property type="match status" value="1"/>
</dbReference>
<dbReference type="SUPFAM" id="SSF52317">
    <property type="entry name" value="Class I glutamine amidotransferase-like"/>
    <property type="match status" value="1"/>
</dbReference>
<dbReference type="PROSITE" id="PS01236">
    <property type="entry name" value="PDXT_SNO_1"/>
    <property type="match status" value="1"/>
</dbReference>
<dbReference type="PROSITE" id="PS51130">
    <property type="entry name" value="PDXT_SNO_2"/>
    <property type="match status" value="1"/>
</dbReference>
<feature type="chain" id="PRO_0000293011" description="Pyridoxal 5'-phosphate synthase subunit PdxT">
    <location>
        <begin position="1"/>
        <end position="191"/>
    </location>
</feature>
<feature type="active site" description="Nucleophile" evidence="1">
    <location>
        <position position="79"/>
    </location>
</feature>
<feature type="active site" description="Charge relay system" evidence="1">
    <location>
        <position position="170"/>
    </location>
</feature>
<feature type="active site" description="Charge relay system" evidence="1">
    <location>
        <position position="172"/>
    </location>
</feature>
<feature type="binding site" evidence="1">
    <location>
        <begin position="48"/>
        <end position="50"/>
    </location>
    <ligand>
        <name>L-glutamine</name>
        <dbReference type="ChEBI" id="CHEBI:58359"/>
    </ligand>
</feature>
<feature type="binding site" evidence="1">
    <location>
        <position position="106"/>
    </location>
    <ligand>
        <name>L-glutamine</name>
        <dbReference type="ChEBI" id="CHEBI:58359"/>
    </ligand>
</feature>
<feature type="binding site" evidence="1">
    <location>
        <begin position="134"/>
        <end position="135"/>
    </location>
    <ligand>
        <name>L-glutamine</name>
        <dbReference type="ChEBI" id="CHEBI:58359"/>
    </ligand>
</feature>
<comment type="function">
    <text evidence="1">Catalyzes the hydrolysis of glutamine to glutamate and ammonia as part of the biosynthesis of pyridoxal 5'-phosphate. The resulting ammonia molecule is channeled to the active site of PdxS.</text>
</comment>
<comment type="catalytic activity">
    <reaction evidence="1">
        <text>aldehydo-D-ribose 5-phosphate + D-glyceraldehyde 3-phosphate + L-glutamine = pyridoxal 5'-phosphate + L-glutamate + phosphate + 3 H2O + H(+)</text>
        <dbReference type="Rhea" id="RHEA:31507"/>
        <dbReference type="ChEBI" id="CHEBI:15377"/>
        <dbReference type="ChEBI" id="CHEBI:15378"/>
        <dbReference type="ChEBI" id="CHEBI:29985"/>
        <dbReference type="ChEBI" id="CHEBI:43474"/>
        <dbReference type="ChEBI" id="CHEBI:58273"/>
        <dbReference type="ChEBI" id="CHEBI:58359"/>
        <dbReference type="ChEBI" id="CHEBI:59776"/>
        <dbReference type="ChEBI" id="CHEBI:597326"/>
        <dbReference type="EC" id="4.3.3.6"/>
    </reaction>
</comment>
<comment type="catalytic activity">
    <reaction evidence="1">
        <text>L-glutamine + H2O = L-glutamate + NH4(+)</text>
        <dbReference type="Rhea" id="RHEA:15889"/>
        <dbReference type="ChEBI" id="CHEBI:15377"/>
        <dbReference type="ChEBI" id="CHEBI:28938"/>
        <dbReference type="ChEBI" id="CHEBI:29985"/>
        <dbReference type="ChEBI" id="CHEBI:58359"/>
        <dbReference type="EC" id="3.5.1.2"/>
    </reaction>
</comment>
<comment type="pathway">
    <text evidence="1">Cofactor biosynthesis; pyridoxal 5'-phosphate biosynthesis.</text>
</comment>
<comment type="subunit">
    <text evidence="1">In the presence of PdxS, forms a dodecamer of heterodimers. Only shows activity in the heterodimer.</text>
</comment>
<comment type="similarity">
    <text evidence="1">Belongs to the glutaminase PdxT/SNO family.</text>
</comment>
<keyword id="KW-0315">Glutamine amidotransferase</keyword>
<keyword id="KW-0378">Hydrolase</keyword>
<keyword id="KW-0456">Lyase</keyword>
<keyword id="KW-0663">Pyridoxal phosphate</keyword>
<keyword id="KW-1185">Reference proteome</keyword>
<organism>
    <name type="scientific">Oenococcus oeni (strain ATCC BAA-331 / PSU-1)</name>
    <dbReference type="NCBI Taxonomy" id="203123"/>
    <lineage>
        <taxon>Bacteria</taxon>
        <taxon>Bacillati</taxon>
        <taxon>Bacillota</taxon>
        <taxon>Bacilli</taxon>
        <taxon>Lactobacillales</taxon>
        <taxon>Lactobacillaceae</taxon>
        <taxon>Oenococcus</taxon>
    </lineage>
</organism>
<sequence length="191" mass="20983">MTVKIGVLALQGAVSEHIKALKDSGAETIAVKDASQLEELDGLVLPGGESTTMRRLMDKYGLFDAIKIFAKKKAIFGTCAGLILMAKEIEGRKGPHLGLLDIDVKRNAFGSQVDSFESDLKIDHVAESFDGVFIRAPYIKKVGPGVEILSTYNQHIVACRQGRFLACAFHPELTGDTRFHEYFVKITKENK</sequence>
<protein>
    <recommendedName>
        <fullName evidence="1">Pyridoxal 5'-phosphate synthase subunit PdxT</fullName>
        <ecNumber evidence="1">4.3.3.6</ecNumber>
    </recommendedName>
    <alternativeName>
        <fullName evidence="1">Pdx2</fullName>
    </alternativeName>
    <alternativeName>
        <fullName evidence="1">Pyridoxal 5'-phosphate synthase glutaminase subunit</fullName>
        <ecNumber evidence="1">3.5.1.2</ecNumber>
    </alternativeName>
</protein>